<protein>
    <recommendedName>
        <fullName>Glutathione S-transferase GstA</fullName>
        <ecNumber evidence="1">2.5.1.18</ecNumber>
    </recommendedName>
</protein>
<keyword id="KW-0963">Cytoplasm</keyword>
<keyword id="KW-1185">Reference proteome</keyword>
<keyword id="KW-0808">Transferase</keyword>
<dbReference type="EC" id="2.5.1.18" evidence="1"/>
<dbReference type="EMBL" id="AE005174">
    <property type="protein sequence ID" value="AAG56624.1"/>
    <property type="molecule type" value="Genomic_DNA"/>
</dbReference>
<dbReference type="EMBL" id="BA000007">
    <property type="protein sequence ID" value="BAB35767.1"/>
    <property type="molecule type" value="Genomic_DNA"/>
</dbReference>
<dbReference type="PIR" id="D85770">
    <property type="entry name" value="D85770"/>
</dbReference>
<dbReference type="PIR" id="H90921">
    <property type="entry name" value="H90921"/>
</dbReference>
<dbReference type="RefSeq" id="NP_310371.1">
    <property type="nucleotide sequence ID" value="NC_002695.1"/>
</dbReference>
<dbReference type="RefSeq" id="WP_000765749.1">
    <property type="nucleotide sequence ID" value="NZ_VOAI01000007.1"/>
</dbReference>
<dbReference type="SMR" id="P0A9D3"/>
<dbReference type="STRING" id="155864.Z2647"/>
<dbReference type="GeneID" id="75204480"/>
<dbReference type="GeneID" id="914142"/>
<dbReference type="KEGG" id="ece:Z2647"/>
<dbReference type="KEGG" id="ecs:ECs_2344"/>
<dbReference type="PATRIC" id="fig|386585.9.peg.2453"/>
<dbReference type="eggNOG" id="COG0625">
    <property type="taxonomic scope" value="Bacteria"/>
</dbReference>
<dbReference type="HOGENOM" id="CLU_011226_6_1_6"/>
<dbReference type="OMA" id="WARAVKL"/>
<dbReference type="Proteomes" id="UP000000558">
    <property type="component" value="Chromosome"/>
</dbReference>
<dbReference type="Proteomes" id="UP000002519">
    <property type="component" value="Chromosome"/>
</dbReference>
<dbReference type="GO" id="GO:0005737">
    <property type="term" value="C:cytoplasm"/>
    <property type="evidence" value="ECO:0007669"/>
    <property type="project" value="UniProtKB-SubCell"/>
</dbReference>
<dbReference type="GO" id="GO:0004364">
    <property type="term" value="F:glutathione transferase activity"/>
    <property type="evidence" value="ECO:0007669"/>
    <property type="project" value="UniProtKB-EC"/>
</dbReference>
<dbReference type="CDD" id="cd03188">
    <property type="entry name" value="GST_C_Beta"/>
    <property type="match status" value="1"/>
</dbReference>
<dbReference type="CDD" id="cd03057">
    <property type="entry name" value="GST_N_Beta"/>
    <property type="match status" value="1"/>
</dbReference>
<dbReference type="FunFam" id="3.40.30.10:FF:000089">
    <property type="entry name" value="Glutathione S-transferase"/>
    <property type="match status" value="1"/>
</dbReference>
<dbReference type="Gene3D" id="1.20.1050.10">
    <property type="match status" value="1"/>
</dbReference>
<dbReference type="Gene3D" id="3.40.30.10">
    <property type="entry name" value="Glutaredoxin"/>
    <property type="match status" value="1"/>
</dbReference>
<dbReference type="InterPro" id="IPR010987">
    <property type="entry name" value="Glutathione-S-Trfase_C-like"/>
</dbReference>
<dbReference type="InterPro" id="IPR036282">
    <property type="entry name" value="Glutathione-S-Trfase_C_sf"/>
</dbReference>
<dbReference type="InterPro" id="IPR040079">
    <property type="entry name" value="Glutathione_S-Trfase"/>
</dbReference>
<dbReference type="InterPro" id="IPR004045">
    <property type="entry name" value="Glutathione_S-Trfase_N"/>
</dbReference>
<dbReference type="InterPro" id="IPR004046">
    <property type="entry name" value="GST_C"/>
</dbReference>
<dbReference type="InterPro" id="IPR036249">
    <property type="entry name" value="Thioredoxin-like_sf"/>
</dbReference>
<dbReference type="NCBIfam" id="NF007831">
    <property type="entry name" value="PRK10542.1"/>
    <property type="match status" value="1"/>
</dbReference>
<dbReference type="PANTHER" id="PTHR44051:SF8">
    <property type="entry name" value="GLUTATHIONE S-TRANSFERASE GSTA"/>
    <property type="match status" value="1"/>
</dbReference>
<dbReference type="PANTHER" id="PTHR44051">
    <property type="entry name" value="GLUTATHIONE S-TRANSFERASE-RELATED"/>
    <property type="match status" value="1"/>
</dbReference>
<dbReference type="Pfam" id="PF00043">
    <property type="entry name" value="GST_C"/>
    <property type="match status" value="1"/>
</dbReference>
<dbReference type="Pfam" id="PF13409">
    <property type="entry name" value="GST_N_2"/>
    <property type="match status" value="1"/>
</dbReference>
<dbReference type="SFLD" id="SFLDS00019">
    <property type="entry name" value="Glutathione_Transferase_(cytos"/>
    <property type="match status" value="1"/>
</dbReference>
<dbReference type="SFLD" id="SFLDG01150">
    <property type="entry name" value="Main.1:_Beta-like"/>
    <property type="match status" value="1"/>
</dbReference>
<dbReference type="SUPFAM" id="SSF47616">
    <property type="entry name" value="GST C-terminal domain-like"/>
    <property type="match status" value="1"/>
</dbReference>
<dbReference type="SUPFAM" id="SSF52833">
    <property type="entry name" value="Thioredoxin-like"/>
    <property type="match status" value="1"/>
</dbReference>
<dbReference type="PROSITE" id="PS50405">
    <property type="entry name" value="GST_CTER"/>
    <property type="match status" value="1"/>
</dbReference>
<dbReference type="PROSITE" id="PS50404">
    <property type="entry name" value="GST_NTER"/>
    <property type="match status" value="1"/>
</dbReference>
<organism>
    <name type="scientific">Escherichia coli O157:H7</name>
    <dbReference type="NCBI Taxonomy" id="83334"/>
    <lineage>
        <taxon>Bacteria</taxon>
        <taxon>Pseudomonadati</taxon>
        <taxon>Pseudomonadota</taxon>
        <taxon>Gammaproteobacteria</taxon>
        <taxon>Enterobacterales</taxon>
        <taxon>Enterobacteriaceae</taxon>
        <taxon>Escherichia</taxon>
    </lineage>
</organism>
<feature type="chain" id="PRO_0000185971" description="Glutathione S-transferase GstA">
    <location>
        <begin position="1"/>
        <end position="201"/>
    </location>
</feature>
<feature type="domain" description="GST N-terminal">
    <location>
        <begin position="1"/>
        <end position="81"/>
    </location>
</feature>
<feature type="domain" description="GST C-terminal">
    <location>
        <begin position="87"/>
        <end position="201"/>
    </location>
</feature>
<feature type="binding site" evidence="1">
    <location>
        <position position="10"/>
    </location>
    <ligand>
        <name>glutathione</name>
        <dbReference type="ChEBI" id="CHEBI:57925"/>
    </ligand>
</feature>
<feature type="binding site" evidence="1">
    <location>
        <position position="35"/>
    </location>
    <ligand>
        <name>glutathione</name>
        <dbReference type="ChEBI" id="CHEBI:57925"/>
    </ligand>
</feature>
<feature type="binding site" evidence="1">
    <location>
        <position position="52"/>
    </location>
    <ligand>
        <name>glutathione</name>
        <dbReference type="ChEBI" id="CHEBI:57925"/>
    </ligand>
</feature>
<feature type="binding site" evidence="1">
    <location>
        <begin position="65"/>
        <end position="66"/>
    </location>
    <ligand>
        <name>glutathione</name>
        <dbReference type="ChEBI" id="CHEBI:57925"/>
    </ligand>
</feature>
<feature type="binding site" evidence="1">
    <location>
        <position position="99"/>
    </location>
    <ligand>
        <name>glutathione</name>
        <dbReference type="ChEBI" id="CHEBI:57925"/>
    </ligand>
</feature>
<feature type="binding site" evidence="1">
    <location>
        <begin position="103"/>
        <end position="106"/>
    </location>
    <ligand>
        <name>glutathione</name>
        <dbReference type="ChEBI" id="CHEBI:57925"/>
    </ligand>
</feature>
<evidence type="ECO:0000250" key="1">
    <source>
        <dbReference type="UniProtKB" id="P0A9D2"/>
    </source>
</evidence>
<evidence type="ECO:0000305" key="2"/>
<sequence>MKLFYKPGACSLASHITLRESGKDFTLVSVDLMKKRLENGDDYFAVNPKGQVPALLLDDGTLLTEGVAIMQYLADSVPDRQLLAPVNSISRYKTIEWLNYIATELHKGFTPLFRPDTPEEYKPTVRAQLEKKLQYVNEALKDEHWICGQRFTIADAYLFTVLRWAYAVKLNLEGLEHIAAFMQRMAERPEVQDALSAEGLK</sequence>
<gene>
    <name type="primary">gstA</name>
    <name type="synonym">gst</name>
    <name type="ordered locus">Z2647</name>
    <name type="ordered locus">ECs2344</name>
</gene>
<accession>P0A9D3</accession>
<accession>P39100</accession>
<reference key="1">
    <citation type="journal article" date="2001" name="Nature">
        <title>Genome sequence of enterohaemorrhagic Escherichia coli O157:H7.</title>
        <authorList>
            <person name="Perna N.T."/>
            <person name="Plunkett G. III"/>
            <person name="Burland V."/>
            <person name="Mau B."/>
            <person name="Glasner J.D."/>
            <person name="Rose D.J."/>
            <person name="Mayhew G.F."/>
            <person name="Evans P.S."/>
            <person name="Gregor J."/>
            <person name="Kirkpatrick H.A."/>
            <person name="Posfai G."/>
            <person name="Hackett J."/>
            <person name="Klink S."/>
            <person name="Boutin A."/>
            <person name="Shao Y."/>
            <person name="Miller L."/>
            <person name="Grotbeck E.J."/>
            <person name="Davis N.W."/>
            <person name="Lim A."/>
            <person name="Dimalanta E.T."/>
            <person name="Potamousis K."/>
            <person name="Apodaca J."/>
            <person name="Anantharaman T.S."/>
            <person name="Lin J."/>
            <person name="Yen G."/>
            <person name="Schwartz D.C."/>
            <person name="Welch R.A."/>
            <person name="Blattner F.R."/>
        </authorList>
    </citation>
    <scope>NUCLEOTIDE SEQUENCE [LARGE SCALE GENOMIC DNA]</scope>
    <source>
        <strain>O157:H7 / EDL933 / ATCC 700927 / EHEC</strain>
    </source>
</reference>
<reference key="2">
    <citation type="journal article" date="2001" name="DNA Res.">
        <title>Complete genome sequence of enterohemorrhagic Escherichia coli O157:H7 and genomic comparison with a laboratory strain K-12.</title>
        <authorList>
            <person name="Hayashi T."/>
            <person name="Makino K."/>
            <person name="Ohnishi M."/>
            <person name="Kurokawa K."/>
            <person name="Ishii K."/>
            <person name="Yokoyama K."/>
            <person name="Han C.-G."/>
            <person name="Ohtsubo E."/>
            <person name="Nakayama K."/>
            <person name="Murata T."/>
            <person name="Tanaka M."/>
            <person name="Tobe T."/>
            <person name="Iida T."/>
            <person name="Takami H."/>
            <person name="Honda T."/>
            <person name="Sasakawa C."/>
            <person name="Ogasawara N."/>
            <person name="Yasunaga T."/>
            <person name="Kuhara S."/>
            <person name="Shiba T."/>
            <person name="Hattori M."/>
            <person name="Shinagawa H."/>
        </authorList>
    </citation>
    <scope>NUCLEOTIDE SEQUENCE [LARGE SCALE GENOMIC DNA]</scope>
    <source>
        <strain>O157:H7 / Sakai / RIMD 0509952 / EHEC</strain>
    </source>
</reference>
<name>GSTA_ECO57</name>
<comment type="function">
    <text evidence="1">Conjugation of reduced glutathione to a wide number of exogenous and endogenous hydrophobic electrophiles.</text>
</comment>
<comment type="catalytic activity">
    <reaction evidence="1">
        <text>RX + glutathione = an S-substituted glutathione + a halide anion + H(+)</text>
        <dbReference type="Rhea" id="RHEA:16437"/>
        <dbReference type="ChEBI" id="CHEBI:15378"/>
        <dbReference type="ChEBI" id="CHEBI:16042"/>
        <dbReference type="ChEBI" id="CHEBI:17792"/>
        <dbReference type="ChEBI" id="CHEBI:57925"/>
        <dbReference type="ChEBI" id="CHEBI:90779"/>
        <dbReference type="EC" id="2.5.1.18"/>
    </reaction>
</comment>
<comment type="subunit">
    <text evidence="1">Homodimer.</text>
</comment>
<comment type="subcellular location">
    <subcellularLocation>
        <location evidence="2">Cytoplasm</location>
    </subcellularLocation>
</comment>
<comment type="similarity">
    <text evidence="2">Belongs to the GST superfamily. Beta family.</text>
</comment>
<proteinExistence type="inferred from homology"/>